<sequence length="338" mass="37862">MSTLRLLISDSYDPWFNLAVEECIFRQMPATQRVLFLWRNADTVVIGRAQNPWKECNTRRMEEDNVRLARRSSGGGAVFHDLGNTCFTFMAGKPEYDKTISTSIVLNALNALGVSAEASGRNDLVVKTAEGDRKVSGSAYRETKDRGFHHGTLLLNADLSRLANYLNPDKKKLAAKGITSVRSRVTNLTELLPGITHEQVCEAITEAFFAHYGEHVEAEIISPDKTPDLPNFAETFARQSSWEWNFGQAPAFSHLLDERFTWGGVELHFDVEKGHITRAQVFTDSLNPAPLEALAGRLQGCLYRADMLQQECEALLVDFPEQEKELRELSAWIAGAVR</sequence>
<reference key="1">
    <citation type="journal article" date="2009" name="PLoS Genet.">
        <title>Organised genome dynamics in the Escherichia coli species results in highly diverse adaptive paths.</title>
        <authorList>
            <person name="Touchon M."/>
            <person name="Hoede C."/>
            <person name="Tenaillon O."/>
            <person name="Barbe V."/>
            <person name="Baeriswyl S."/>
            <person name="Bidet P."/>
            <person name="Bingen E."/>
            <person name="Bonacorsi S."/>
            <person name="Bouchier C."/>
            <person name="Bouvet O."/>
            <person name="Calteau A."/>
            <person name="Chiapello H."/>
            <person name="Clermont O."/>
            <person name="Cruveiller S."/>
            <person name="Danchin A."/>
            <person name="Diard M."/>
            <person name="Dossat C."/>
            <person name="Karoui M.E."/>
            <person name="Frapy E."/>
            <person name="Garry L."/>
            <person name="Ghigo J.M."/>
            <person name="Gilles A.M."/>
            <person name="Johnson J."/>
            <person name="Le Bouguenec C."/>
            <person name="Lescat M."/>
            <person name="Mangenot S."/>
            <person name="Martinez-Jehanne V."/>
            <person name="Matic I."/>
            <person name="Nassif X."/>
            <person name="Oztas S."/>
            <person name="Petit M.A."/>
            <person name="Pichon C."/>
            <person name="Rouy Z."/>
            <person name="Ruf C.S."/>
            <person name="Schneider D."/>
            <person name="Tourret J."/>
            <person name="Vacherie B."/>
            <person name="Vallenet D."/>
            <person name="Medigue C."/>
            <person name="Rocha E.P.C."/>
            <person name="Denamur E."/>
        </authorList>
    </citation>
    <scope>NUCLEOTIDE SEQUENCE [LARGE SCALE GENOMIC DNA]</scope>
    <source>
        <strain>UMN026 / ExPEC</strain>
    </source>
</reference>
<organism>
    <name type="scientific">Escherichia coli O17:K52:H18 (strain UMN026 / ExPEC)</name>
    <dbReference type="NCBI Taxonomy" id="585056"/>
    <lineage>
        <taxon>Bacteria</taxon>
        <taxon>Pseudomonadati</taxon>
        <taxon>Pseudomonadota</taxon>
        <taxon>Gammaproteobacteria</taxon>
        <taxon>Enterobacterales</taxon>
        <taxon>Enterobacteriaceae</taxon>
        <taxon>Escherichia</taxon>
    </lineage>
</organism>
<dbReference type="EC" id="6.3.1.20" evidence="1"/>
<dbReference type="EMBL" id="CU928163">
    <property type="protein sequence ID" value="CAR16119.1"/>
    <property type="molecule type" value="Genomic_DNA"/>
</dbReference>
<dbReference type="RefSeq" id="WP_000105844.1">
    <property type="nucleotide sequence ID" value="NC_011751.1"/>
</dbReference>
<dbReference type="RefSeq" id="YP_002415583.1">
    <property type="nucleotide sequence ID" value="NC_011751.1"/>
</dbReference>
<dbReference type="SMR" id="B7NH54"/>
<dbReference type="STRING" id="585056.ECUMN_5010"/>
<dbReference type="KEGG" id="eum:ECUMN_5010"/>
<dbReference type="PATRIC" id="fig|585056.7.peg.5175"/>
<dbReference type="HOGENOM" id="CLU_022986_0_1_6"/>
<dbReference type="UniPathway" id="UPA00537">
    <property type="reaction ID" value="UER00594"/>
</dbReference>
<dbReference type="UniPathway" id="UPA00537">
    <property type="reaction ID" value="UER00595"/>
</dbReference>
<dbReference type="Proteomes" id="UP000007097">
    <property type="component" value="Chromosome"/>
</dbReference>
<dbReference type="GO" id="GO:0005829">
    <property type="term" value="C:cytosol"/>
    <property type="evidence" value="ECO:0007669"/>
    <property type="project" value="TreeGrafter"/>
</dbReference>
<dbReference type="GO" id="GO:0005524">
    <property type="term" value="F:ATP binding"/>
    <property type="evidence" value="ECO:0007669"/>
    <property type="project" value="UniProtKB-KW"/>
</dbReference>
<dbReference type="GO" id="GO:0016979">
    <property type="term" value="F:lipoate-protein ligase activity"/>
    <property type="evidence" value="ECO:0007669"/>
    <property type="project" value="UniProtKB-UniRule"/>
</dbReference>
<dbReference type="GO" id="GO:0017118">
    <property type="term" value="F:lipoyltransferase activity"/>
    <property type="evidence" value="ECO:0007669"/>
    <property type="project" value="TreeGrafter"/>
</dbReference>
<dbReference type="GO" id="GO:0036211">
    <property type="term" value="P:protein modification process"/>
    <property type="evidence" value="ECO:0007669"/>
    <property type="project" value="InterPro"/>
</dbReference>
<dbReference type="CDD" id="cd16435">
    <property type="entry name" value="BPL_LplA_LipB"/>
    <property type="match status" value="1"/>
</dbReference>
<dbReference type="FunFam" id="3.30.390.50:FF:000002">
    <property type="entry name" value="Lipoate-protein ligase A"/>
    <property type="match status" value="1"/>
</dbReference>
<dbReference type="FunFam" id="3.30.930.10:FF:000024">
    <property type="entry name" value="Lipoate-protein ligase A"/>
    <property type="match status" value="1"/>
</dbReference>
<dbReference type="Gene3D" id="3.30.930.10">
    <property type="entry name" value="Bira Bifunctional Protein, Domain 2"/>
    <property type="match status" value="1"/>
</dbReference>
<dbReference type="Gene3D" id="3.30.390.50">
    <property type="entry name" value="CO dehydrogenase flavoprotein, C-terminal domain"/>
    <property type="match status" value="1"/>
</dbReference>
<dbReference type="HAMAP" id="MF_01602">
    <property type="entry name" value="LplA"/>
    <property type="match status" value="1"/>
</dbReference>
<dbReference type="InterPro" id="IPR045864">
    <property type="entry name" value="aa-tRNA-synth_II/BPL/LPL"/>
</dbReference>
<dbReference type="InterPro" id="IPR004143">
    <property type="entry name" value="BPL_LPL_catalytic"/>
</dbReference>
<dbReference type="InterPro" id="IPR023741">
    <property type="entry name" value="Lipoate_ligase_A"/>
</dbReference>
<dbReference type="InterPro" id="IPR019491">
    <property type="entry name" value="Lipoate_protein_ligase_C"/>
</dbReference>
<dbReference type="InterPro" id="IPR004562">
    <property type="entry name" value="LipoylTrfase_LipoateP_Ligase"/>
</dbReference>
<dbReference type="NCBIfam" id="TIGR00545">
    <property type="entry name" value="lipoyltrans"/>
    <property type="match status" value="1"/>
</dbReference>
<dbReference type="PANTHER" id="PTHR12561">
    <property type="entry name" value="LIPOATE-PROTEIN LIGASE"/>
    <property type="match status" value="1"/>
</dbReference>
<dbReference type="PANTHER" id="PTHR12561:SF3">
    <property type="entry name" value="LIPOYLTRANSFERASE 1, MITOCHONDRIAL"/>
    <property type="match status" value="1"/>
</dbReference>
<dbReference type="Pfam" id="PF10437">
    <property type="entry name" value="Lip_prot_lig_C"/>
    <property type="match status" value="1"/>
</dbReference>
<dbReference type="Pfam" id="PF21948">
    <property type="entry name" value="LplA-B_cat"/>
    <property type="match status" value="1"/>
</dbReference>
<dbReference type="SUPFAM" id="SSF55681">
    <property type="entry name" value="Class II aaRS and biotin synthetases"/>
    <property type="match status" value="1"/>
</dbReference>
<dbReference type="SUPFAM" id="SSF82649">
    <property type="entry name" value="SufE/NifU"/>
    <property type="match status" value="1"/>
</dbReference>
<dbReference type="PROSITE" id="PS51733">
    <property type="entry name" value="BPL_LPL_CATALYTIC"/>
    <property type="match status" value="1"/>
</dbReference>
<feature type="chain" id="PRO_1000148105" description="Lipoate-protein ligase A">
    <location>
        <begin position="1"/>
        <end position="338"/>
    </location>
</feature>
<feature type="domain" description="BPL/LPL catalytic" evidence="2">
    <location>
        <begin position="29"/>
        <end position="216"/>
    </location>
</feature>
<feature type="binding site" evidence="1">
    <location>
        <position position="71"/>
    </location>
    <ligand>
        <name>ATP</name>
        <dbReference type="ChEBI" id="CHEBI:30616"/>
    </ligand>
</feature>
<feature type="binding site" evidence="1">
    <location>
        <begin position="76"/>
        <end position="79"/>
    </location>
    <ligand>
        <name>ATP</name>
        <dbReference type="ChEBI" id="CHEBI:30616"/>
    </ligand>
</feature>
<feature type="binding site" evidence="1">
    <location>
        <position position="134"/>
    </location>
    <ligand>
        <name>(R)-lipoate</name>
        <dbReference type="ChEBI" id="CHEBI:83088"/>
    </ligand>
</feature>
<feature type="binding site" evidence="1">
    <location>
        <position position="134"/>
    </location>
    <ligand>
        <name>ATP</name>
        <dbReference type="ChEBI" id="CHEBI:30616"/>
    </ligand>
</feature>
<evidence type="ECO:0000255" key="1">
    <source>
        <dbReference type="HAMAP-Rule" id="MF_01602"/>
    </source>
</evidence>
<evidence type="ECO:0000255" key="2">
    <source>
        <dbReference type="PROSITE-ProRule" id="PRU01067"/>
    </source>
</evidence>
<name>LPLA_ECOLU</name>
<gene>
    <name evidence="1" type="primary">lplA</name>
    <name type="ordered locus">ECUMN_5010</name>
</gene>
<proteinExistence type="inferred from homology"/>
<comment type="function">
    <text evidence="1">Catalyzes both the ATP-dependent activation of exogenously supplied lipoate to lipoyl-AMP and the transfer of the activated lipoyl onto the lipoyl domains of lipoate-dependent enzymes.</text>
</comment>
<comment type="catalytic activity">
    <reaction evidence="1">
        <text>L-lysyl-[lipoyl-carrier protein] + (R)-lipoate + ATP = N(6)-[(R)-lipoyl]-L-lysyl-[lipoyl-carrier protein] + AMP + diphosphate + H(+)</text>
        <dbReference type="Rhea" id="RHEA:49288"/>
        <dbReference type="Rhea" id="RHEA-COMP:10500"/>
        <dbReference type="Rhea" id="RHEA-COMP:10502"/>
        <dbReference type="ChEBI" id="CHEBI:15378"/>
        <dbReference type="ChEBI" id="CHEBI:29969"/>
        <dbReference type="ChEBI" id="CHEBI:30616"/>
        <dbReference type="ChEBI" id="CHEBI:33019"/>
        <dbReference type="ChEBI" id="CHEBI:83088"/>
        <dbReference type="ChEBI" id="CHEBI:83099"/>
        <dbReference type="ChEBI" id="CHEBI:456215"/>
        <dbReference type="EC" id="6.3.1.20"/>
    </reaction>
</comment>
<comment type="pathway">
    <text evidence="1">Protein modification; protein lipoylation via exogenous pathway; protein N(6)-(lipoyl)lysine from lipoate: step 1/2.</text>
</comment>
<comment type="pathway">
    <text evidence="1">Protein modification; protein lipoylation via exogenous pathway; protein N(6)-(lipoyl)lysine from lipoate: step 2/2.</text>
</comment>
<comment type="subunit">
    <text evidence="1">Monomer.</text>
</comment>
<comment type="subcellular location">
    <subcellularLocation>
        <location evidence="1">Cytoplasm</location>
    </subcellularLocation>
</comment>
<comment type="miscellaneous">
    <text evidence="1">In the transfer reaction, the free carboxyl group of lipoic acid is attached via an amide linkage to the epsilon-amino group of a specific lysine residue of lipoyl domains of lipoate-dependent enzymes.</text>
</comment>
<comment type="similarity">
    <text evidence="1">Belongs to the LplA family.</text>
</comment>
<protein>
    <recommendedName>
        <fullName evidence="1">Lipoate-protein ligase A</fullName>
        <ecNumber evidence="1">6.3.1.20</ecNumber>
    </recommendedName>
    <alternativeName>
        <fullName evidence="1">Lipoate--protein ligase</fullName>
    </alternativeName>
</protein>
<keyword id="KW-0067">ATP-binding</keyword>
<keyword id="KW-0963">Cytoplasm</keyword>
<keyword id="KW-0436">Ligase</keyword>
<keyword id="KW-0547">Nucleotide-binding</keyword>
<accession>B7NH54</accession>